<feature type="chain" id="PRO_0000330931" description="Phosphatidylinositol-glycan biosynthesis class W protein">
    <location>
        <begin position="1"/>
        <end position="492"/>
    </location>
</feature>
<feature type="transmembrane region" description="Helical" evidence="2">
    <location>
        <begin position="26"/>
        <end position="46"/>
    </location>
</feature>
<feature type="transmembrane region" description="Helical" evidence="2">
    <location>
        <begin position="59"/>
        <end position="79"/>
    </location>
</feature>
<feature type="transmembrane region" description="Helical" evidence="2">
    <location>
        <begin position="82"/>
        <end position="102"/>
    </location>
</feature>
<feature type="transmembrane region" description="Helical" evidence="2">
    <location>
        <begin position="127"/>
        <end position="147"/>
    </location>
</feature>
<feature type="transmembrane region" description="Helical" evidence="2">
    <location>
        <begin position="156"/>
        <end position="176"/>
    </location>
</feature>
<feature type="transmembrane region" description="Helical" evidence="2">
    <location>
        <begin position="264"/>
        <end position="284"/>
    </location>
</feature>
<feature type="transmembrane region" description="Helical" evidence="2">
    <location>
        <begin position="290"/>
        <end position="310"/>
    </location>
</feature>
<feature type="transmembrane region" description="Helical" evidence="2">
    <location>
        <begin position="331"/>
        <end position="351"/>
    </location>
</feature>
<feature type="transmembrane region" description="Helical" evidence="2">
    <location>
        <begin position="364"/>
        <end position="384"/>
    </location>
</feature>
<feature type="transmembrane region" description="Helical" evidence="2">
    <location>
        <begin position="399"/>
        <end position="419"/>
    </location>
</feature>
<feature type="transmembrane region" description="Helical" evidence="2">
    <location>
        <begin position="437"/>
        <end position="457"/>
    </location>
</feature>
<feature type="transmembrane region" description="Helical" evidence="2">
    <location>
        <begin position="464"/>
        <end position="484"/>
    </location>
</feature>
<feature type="region of interest" description="Disordered" evidence="3">
    <location>
        <begin position="185"/>
        <end position="216"/>
    </location>
</feature>
<feature type="compositionally biased region" description="Low complexity" evidence="3">
    <location>
        <begin position="205"/>
        <end position="216"/>
    </location>
</feature>
<feature type="glycosylation site" description="N-linked (GlcNAc...) asparagine" evidence="2">
    <location>
        <position position="204"/>
    </location>
</feature>
<feature type="glycosylation site" description="N-linked (GlcNAc...) asparagine" evidence="2">
    <location>
        <position position="289"/>
    </location>
</feature>
<feature type="glycosylation site" description="N-linked (GlcNAc...) asparagine" evidence="2">
    <location>
        <position position="424"/>
    </location>
</feature>
<name>PIGW_DICDI</name>
<comment type="function">
    <text evidence="1">Probable acetyltransferase, which acetylates the inositol ring of phosphatidylinositol during biosynthesis of GPI-anchor.</text>
</comment>
<comment type="pathway">
    <text evidence="1">Glycolipid biosynthesis; glycosylphosphatidylinositol-anchor biosynthesis.</text>
</comment>
<comment type="subcellular location">
    <subcellularLocation>
        <location evidence="1">Endoplasmic reticulum membrane</location>
        <topology evidence="1">Multi-pass membrane protein</topology>
    </subcellularLocation>
</comment>
<comment type="similarity">
    <text evidence="4">Belongs to the PIGW family.</text>
</comment>
<organism>
    <name type="scientific">Dictyostelium discoideum</name>
    <name type="common">Social amoeba</name>
    <dbReference type="NCBI Taxonomy" id="44689"/>
    <lineage>
        <taxon>Eukaryota</taxon>
        <taxon>Amoebozoa</taxon>
        <taxon>Evosea</taxon>
        <taxon>Eumycetozoa</taxon>
        <taxon>Dictyostelia</taxon>
        <taxon>Dictyosteliales</taxon>
        <taxon>Dictyosteliaceae</taxon>
        <taxon>Dictyostelium</taxon>
    </lineage>
</organism>
<gene>
    <name evidence="4" type="primary">pigw</name>
    <name evidence="5" type="ORF">DDB_G0286111</name>
</gene>
<reference key="1">
    <citation type="journal article" date="2005" name="Nature">
        <title>The genome of the social amoeba Dictyostelium discoideum.</title>
        <authorList>
            <person name="Eichinger L."/>
            <person name="Pachebat J.A."/>
            <person name="Gloeckner G."/>
            <person name="Rajandream M.A."/>
            <person name="Sucgang R."/>
            <person name="Berriman M."/>
            <person name="Song J."/>
            <person name="Olsen R."/>
            <person name="Szafranski K."/>
            <person name="Xu Q."/>
            <person name="Tunggal B."/>
            <person name="Kummerfeld S."/>
            <person name="Madera M."/>
            <person name="Konfortov B.A."/>
            <person name="Rivero F."/>
            <person name="Bankier A.T."/>
            <person name="Lehmann R."/>
            <person name="Hamlin N."/>
            <person name="Davies R."/>
            <person name="Gaudet P."/>
            <person name="Fey P."/>
            <person name="Pilcher K."/>
            <person name="Chen G."/>
            <person name="Saunders D."/>
            <person name="Sodergren E.J."/>
            <person name="Davis P."/>
            <person name="Kerhornou A."/>
            <person name="Nie X."/>
            <person name="Hall N."/>
            <person name="Anjard C."/>
            <person name="Hemphill L."/>
            <person name="Bason N."/>
            <person name="Farbrother P."/>
            <person name="Desany B."/>
            <person name="Just E."/>
            <person name="Morio T."/>
            <person name="Rost R."/>
            <person name="Churcher C.M."/>
            <person name="Cooper J."/>
            <person name="Haydock S."/>
            <person name="van Driessche N."/>
            <person name="Cronin A."/>
            <person name="Goodhead I."/>
            <person name="Muzny D.M."/>
            <person name="Mourier T."/>
            <person name="Pain A."/>
            <person name="Lu M."/>
            <person name="Harper D."/>
            <person name="Lindsay R."/>
            <person name="Hauser H."/>
            <person name="James K.D."/>
            <person name="Quiles M."/>
            <person name="Madan Babu M."/>
            <person name="Saito T."/>
            <person name="Buchrieser C."/>
            <person name="Wardroper A."/>
            <person name="Felder M."/>
            <person name="Thangavelu M."/>
            <person name="Johnson D."/>
            <person name="Knights A."/>
            <person name="Loulseged H."/>
            <person name="Mungall K.L."/>
            <person name="Oliver K."/>
            <person name="Price C."/>
            <person name="Quail M.A."/>
            <person name="Urushihara H."/>
            <person name="Hernandez J."/>
            <person name="Rabbinowitsch E."/>
            <person name="Steffen D."/>
            <person name="Sanders M."/>
            <person name="Ma J."/>
            <person name="Kohara Y."/>
            <person name="Sharp S."/>
            <person name="Simmonds M.N."/>
            <person name="Spiegler S."/>
            <person name="Tivey A."/>
            <person name="Sugano S."/>
            <person name="White B."/>
            <person name="Walker D."/>
            <person name="Woodward J.R."/>
            <person name="Winckler T."/>
            <person name="Tanaka Y."/>
            <person name="Shaulsky G."/>
            <person name="Schleicher M."/>
            <person name="Weinstock G.M."/>
            <person name="Rosenthal A."/>
            <person name="Cox E.C."/>
            <person name="Chisholm R.L."/>
            <person name="Gibbs R.A."/>
            <person name="Loomis W.F."/>
            <person name="Platzer M."/>
            <person name="Kay R.R."/>
            <person name="Williams J.G."/>
            <person name="Dear P.H."/>
            <person name="Noegel A.A."/>
            <person name="Barrell B.G."/>
            <person name="Kuspa A."/>
        </authorList>
    </citation>
    <scope>NUCLEOTIDE SEQUENCE [LARGE SCALE GENOMIC DNA]</scope>
    <source>
        <strain>AX4</strain>
    </source>
</reference>
<dbReference type="EC" id="2.3.-.-" evidence="1"/>
<dbReference type="EMBL" id="AAFI02000085">
    <property type="protein sequence ID" value="EAL64434.2"/>
    <property type="molecule type" value="Genomic_DNA"/>
</dbReference>
<dbReference type="RefSeq" id="XP_637914.2">
    <property type="nucleotide sequence ID" value="XM_632822.2"/>
</dbReference>
<dbReference type="SMR" id="Q54MC0"/>
<dbReference type="FunCoup" id="Q54MC0">
    <property type="interactions" value="368"/>
</dbReference>
<dbReference type="STRING" id="44689.Q54MC0"/>
<dbReference type="TCDB" id="9.B.315.1.4">
    <property type="family name" value="the glycoslyphosphatidylinositol (gpi) membrane anchoring protein gwt1 (gwt1) family"/>
</dbReference>
<dbReference type="GlyCosmos" id="Q54MC0">
    <property type="glycosylation" value="3 sites, No reported glycans"/>
</dbReference>
<dbReference type="GlyGen" id="Q54MC0">
    <property type="glycosylation" value="3 sites"/>
</dbReference>
<dbReference type="PaxDb" id="44689-DDB0235223"/>
<dbReference type="EnsemblProtists" id="EAL64434">
    <property type="protein sequence ID" value="EAL64434"/>
    <property type="gene ID" value="DDB_G0286111"/>
</dbReference>
<dbReference type="GeneID" id="8625425"/>
<dbReference type="KEGG" id="ddi:DDB_G0286111"/>
<dbReference type="dictyBase" id="DDB_G0286111">
    <property type="gene designation" value="pigW"/>
</dbReference>
<dbReference type="VEuPathDB" id="AmoebaDB:DDB_G0286111"/>
<dbReference type="eggNOG" id="KOG0411">
    <property type="taxonomic scope" value="Eukaryota"/>
</dbReference>
<dbReference type="HOGENOM" id="CLU_020802_2_2_1"/>
<dbReference type="InParanoid" id="Q54MC0"/>
<dbReference type="OMA" id="GLYVMQP"/>
<dbReference type="PhylomeDB" id="Q54MC0"/>
<dbReference type="Reactome" id="R-DDI-162710">
    <property type="pathway name" value="Synthesis of glycosylphosphatidylinositol (GPI)"/>
</dbReference>
<dbReference type="UniPathway" id="UPA00196"/>
<dbReference type="PRO" id="PR:Q54MC0"/>
<dbReference type="Proteomes" id="UP000002195">
    <property type="component" value="Chromosome 4"/>
</dbReference>
<dbReference type="GO" id="GO:0005789">
    <property type="term" value="C:endoplasmic reticulum membrane"/>
    <property type="evidence" value="ECO:0007669"/>
    <property type="project" value="UniProtKB-SubCell"/>
</dbReference>
<dbReference type="GO" id="GO:0032216">
    <property type="term" value="F:glucosaminyl-phosphatidylinositol O-acyltransferase activity"/>
    <property type="evidence" value="ECO:0000318"/>
    <property type="project" value="GO_Central"/>
</dbReference>
<dbReference type="GO" id="GO:0006506">
    <property type="term" value="P:GPI anchor biosynthetic process"/>
    <property type="evidence" value="ECO:0000318"/>
    <property type="project" value="GO_Central"/>
</dbReference>
<dbReference type="InterPro" id="IPR009447">
    <property type="entry name" value="PIGW/GWT1"/>
</dbReference>
<dbReference type="PANTHER" id="PTHR20661">
    <property type="entry name" value="PHOSPHATIDYLINOSITOL-GLYCAN BIOSYNTHESIS CLASS W PROTEIN"/>
    <property type="match status" value="1"/>
</dbReference>
<dbReference type="PANTHER" id="PTHR20661:SF0">
    <property type="entry name" value="PHOSPHATIDYLINOSITOL-GLYCAN BIOSYNTHESIS CLASS W PROTEIN"/>
    <property type="match status" value="1"/>
</dbReference>
<dbReference type="Pfam" id="PF06423">
    <property type="entry name" value="GWT1"/>
    <property type="match status" value="1"/>
</dbReference>
<dbReference type="PIRSF" id="PIRSF017321">
    <property type="entry name" value="GWT1"/>
    <property type="match status" value="1"/>
</dbReference>
<keyword id="KW-0012">Acyltransferase</keyword>
<keyword id="KW-0256">Endoplasmic reticulum</keyword>
<keyword id="KW-0325">Glycoprotein</keyword>
<keyword id="KW-0337">GPI-anchor biosynthesis</keyword>
<keyword id="KW-0472">Membrane</keyword>
<keyword id="KW-1185">Reference proteome</keyword>
<keyword id="KW-0808">Transferase</keyword>
<keyword id="KW-0812">Transmembrane</keyword>
<keyword id="KW-1133">Transmembrane helix</keyword>
<proteinExistence type="inferred from homology"/>
<sequence>MDDQYKNDHQNFVSGNDGSTFFETCFILTLMPISVLFQRVVFATFFNNDKFPLPLALRFILEFFFIIVPFISAITFTELTPFLIVGMLITCLVVPMFAQKNVTIYFKNPKETLLNLNSMRKGFLEEYRAFVMAATCICILAVDFQVFPRRLGKTETYGISLMDIGVGSVVLSGALVSRQSRSSLIEKQQKKKREEEEDDNDKINKTSSSSSSSSSALKQQQQQVLSRSSLMWHQVKAQAPLMILGFVRMILTKSINYQEHVSEYGLHWNFFFTLGFVSISLAFLKFNANISAILGVVLICVYQFLLNSFGLTDYILNHPRDNLISMNKEGICSFVGYLAIYLIGTKIGTELFKVRSSLTEWRKFATKLLISSIVFYILWILCEIYIDKTSRRMANLGYVLAILSINLFNFSINILITLITGNHNASVIAKSINRNQLFIFLLGNILTGLINFSMKTIYAPVEQSMIIITSYTFALCLLAFILDYKNINIKFW</sequence>
<protein>
    <recommendedName>
        <fullName evidence="4">Phosphatidylinositol-glycan biosynthesis class W protein</fullName>
        <ecNumber evidence="1">2.3.-.-</ecNumber>
    </recommendedName>
</protein>
<accession>Q54MC0</accession>
<evidence type="ECO:0000250" key="1">
    <source>
        <dbReference type="UniProtKB" id="Q7TSN4"/>
    </source>
</evidence>
<evidence type="ECO:0000255" key="2"/>
<evidence type="ECO:0000256" key="3">
    <source>
        <dbReference type="SAM" id="MobiDB-lite"/>
    </source>
</evidence>
<evidence type="ECO:0000305" key="4"/>
<evidence type="ECO:0000312" key="5">
    <source>
        <dbReference type="dictyBase" id="DDB_G0286111"/>
    </source>
</evidence>